<evidence type="ECO:0000255" key="1">
    <source>
        <dbReference type="HAMAP-Rule" id="MF_00444"/>
    </source>
</evidence>
<name>CLPP_LEVBA</name>
<sequence>MNLVPTVIEQSSRGERAYDIYSRLLKDRIIMLSGPIEDDMANAIIAQLLFLDAQDSTKDISLYINSPGGVVSSGLAIYDTMNFIQSDVQTITLGMAASMASVLASSGTKGKRFALPHAQVMIHQPSGGAQGQQTEIEIAAREILKTRELINKILAENSGQPIERLNQDTERDNYLSAQEAVDYGLIDHIMTNSSEQKK</sequence>
<proteinExistence type="inferred from homology"/>
<protein>
    <recommendedName>
        <fullName evidence="1">ATP-dependent Clp protease proteolytic subunit</fullName>
        <ecNumber evidence="1">3.4.21.92</ecNumber>
    </recommendedName>
    <alternativeName>
        <fullName evidence="1">Endopeptidase Clp</fullName>
    </alternativeName>
</protein>
<gene>
    <name evidence="1" type="primary">clpP</name>
    <name type="ordered locus">LVIS_0654</name>
</gene>
<reference key="1">
    <citation type="journal article" date="2006" name="Proc. Natl. Acad. Sci. U.S.A.">
        <title>Comparative genomics of the lactic acid bacteria.</title>
        <authorList>
            <person name="Makarova K.S."/>
            <person name="Slesarev A."/>
            <person name="Wolf Y.I."/>
            <person name="Sorokin A."/>
            <person name="Mirkin B."/>
            <person name="Koonin E.V."/>
            <person name="Pavlov A."/>
            <person name="Pavlova N."/>
            <person name="Karamychev V."/>
            <person name="Polouchine N."/>
            <person name="Shakhova V."/>
            <person name="Grigoriev I."/>
            <person name="Lou Y."/>
            <person name="Rohksar D."/>
            <person name="Lucas S."/>
            <person name="Huang K."/>
            <person name="Goodstein D.M."/>
            <person name="Hawkins T."/>
            <person name="Plengvidhya V."/>
            <person name="Welker D."/>
            <person name="Hughes J."/>
            <person name="Goh Y."/>
            <person name="Benson A."/>
            <person name="Baldwin K."/>
            <person name="Lee J.-H."/>
            <person name="Diaz-Muniz I."/>
            <person name="Dosti B."/>
            <person name="Smeianov V."/>
            <person name="Wechter W."/>
            <person name="Barabote R."/>
            <person name="Lorca G."/>
            <person name="Altermann E."/>
            <person name="Barrangou R."/>
            <person name="Ganesan B."/>
            <person name="Xie Y."/>
            <person name="Rawsthorne H."/>
            <person name="Tamir D."/>
            <person name="Parker C."/>
            <person name="Breidt F."/>
            <person name="Broadbent J.R."/>
            <person name="Hutkins R."/>
            <person name="O'Sullivan D."/>
            <person name="Steele J."/>
            <person name="Unlu G."/>
            <person name="Saier M.H. Jr."/>
            <person name="Klaenhammer T."/>
            <person name="Richardson P."/>
            <person name="Kozyavkin S."/>
            <person name="Weimer B.C."/>
            <person name="Mills D.A."/>
        </authorList>
    </citation>
    <scope>NUCLEOTIDE SEQUENCE [LARGE SCALE GENOMIC DNA]</scope>
    <source>
        <strain>ATCC 367 / BCRC 12310 / CIP 105137 / JCM 1170 / LMG 11437 / NCIMB 947 / NCTC 947</strain>
    </source>
</reference>
<feature type="chain" id="PRO_1000026100" description="ATP-dependent Clp protease proteolytic subunit">
    <location>
        <begin position="1"/>
        <end position="198"/>
    </location>
</feature>
<feature type="active site" description="Nucleophile" evidence="1">
    <location>
        <position position="98"/>
    </location>
</feature>
<feature type="active site" evidence="1">
    <location>
        <position position="123"/>
    </location>
</feature>
<keyword id="KW-0963">Cytoplasm</keyword>
<keyword id="KW-0378">Hydrolase</keyword>
<keyword id="KW-0645">Protease</keyword>
<keyword id="KW-1185">Reference proteome</keyword>
<keyword id="KW-0720">Serine protease</keyword>
<organism>
    <name type="scientific">Levilactobacillus brevis (strain ATCC 367 / BCRC 12310 / CIP 105137 / JCM 1170 / LMG 11437 / NCIMB 947 / NCTC 947)</name>
    <name type="common">Lactobacillus brevis</name>
    <dbReference type="NCBI Taxonomy" id="387344"/>
    <lineage>
        <taxon>Bacteria</taxon>
        <taxon>Bacillati</taxon>
        <taxon>Bacillota</taxon>
        <taxon>Bacilli</taxon>
        <taxon>Lactobacillales</taxon>
        <taxon>Lactobacillaceae</taxon>
        <taxon>Levilactobacillus</taxon>
    </lineage>
</organism>
<dbReference type="EC" id="3.4.21.92" evidence="1"/>
<dbReference type="EMBL" id="CP000416">
    <property type="protein sequence ID" value="ABJ63799.1"/>
    <property type="molecule type" value="Genomic_DNA"/>
</dbReference>
<dbReference type="RefSeq" id="WP_011667431.1">
    <property type="nucleotide sequence ID" value="NC_008497.1"/>
</dbReference>
<dbReference type="SMR" id="Q03SM3"/>
<dbReference type="STRING" id="387344.LVIS_0654"/>
<dbReference type="MEROPS" id="S14.001"/>
<dbReference type="GeneID" id="56992471"/>
<dbReference type="KEGG" id="lbr:LVIS_0654"/>
<dbReference type="eggNOG" id="COG0740">
    <property type="taxonomic scope" value="Bacteria"/>
</dbReference>
<dbReference type="HOGENOM" id="CLU_058707_3_2_9"/>
<dbReference type="Proteomes" id="UP000001652">
    <property type="component" value="Chromosome"/>
</dbReference>
<dbReference type="GO" id="GO:0005737">
    <property type="term" value="C:cytoplasm"/>
    <property type="evidence" value="ECO:0007669"/>
    <property type="project" value="UniProtKB-SubCell"/>
</dbReference>
<dbReference type="GO" id="GO:0009368">
    <property type="term" value="C:endopeptidase Clp complex"/>
    <property type="evidence" value="ECO:0007669"/>
    <property type="project" value="TreeGrafter"/>
</dbReference>
<dbReference type="GO" id="GO:0004176">
    <property type="term" value="F:ATP-dependent peptidase activity"/>
    <property type="evidence" value="ECO:0007669"/>
    <property type="project" value="InterPro"/>
</dbReference>
<dbReference type="GO" id="GO:0051117">
    <property type="term" value="F:ATPase binding"/>
    <property type="evidence" value="ECO:0007669"/>
    <property type="project" value="TreeGrafter"/>
</dbReference>
<dbReference type="GO" id="GO:0004252">
    <property type="term" value="F:serine-type endopeptidase activity"/>
    <property type="evidence" value="ECO:0007669"/>
    <property type="project" value="UniProtKB-UniRule"/>
</dbReference>
<dbReference type="GO" id="GO:0006515">
    <property type="term" value="P:protein quality control for misfolded or incompletely synthesized proteins"/>
    <property type="evidence" value="ECO:0007669"/>
    <property type="project" value="TreeGrafter"/>
</dbReference>
<dbReference type="CDD" id="cd07017">
    <property type="entry name" value="S14_ClpP_2"/>
    <property type="match status" value="1"/>
</dbReference>
<dbReference type="FunFam" id="3.90.226.10:FF:000001">
    <property type="entry name" value="ATP-dependent Clp protease proteolytic subunit"/>
    <property type="match status" value="1"/>
</dbReference>
<dbReference type="Gene3D" id="3.90.226.10">
    <property type="entry name" value="2-enoyl-CoA Hydratase, Chain A, domain 1"/>
    <property type="match status" value="1"/>
</dbReference>
<dbReference type="HAMAP" id="MF_00444">
    <property type="entry name" value="ClpP"/>
    <property type="match status" value="1"/>
</dbReference>
<dbReference type="InterPro" id="IPR001907">
    <property type="entry name" value="ClpP"/>
</dbReference>
<dbReference type="InterPro" id="IPR029045">
    <property type="entry name" value="ClpP/crotonase-like_dom_sf"/>
</dbReference>
<dbReference type="InterPro" id="IPR023562">
    <property type="entry name" value="ClpP/TepA"/>
</dbReference>
<dbReference type="InterPro" id="IPR033135">
    <property type="entry name" value="ClpP_His_AS"/>
</dbReference>
<dbReference type="InterPro" id="IPR018215">
    <property type="entry name" value="ClpP_Ser_AS"/>
</dbReference>
<dbReference type="NCBIfam" id="TIGR00493">
    <property type="entry name" value="clpP"/>
    <property type="match status" value="1"/>
</dbReference>
<dbReference type="NCBIfam" id="NF001368">
    <property type="entry name" value="PRK00277.1"/>
    <property type="match status" value="1"/>
</dbReference>
<dbReference type="NCBIfam" id="NF009205">
    <property type="entry name" value="PRK12553.1"/>
    <property type="match status" value="1"/>
</dbReference>
<dbReference type="PANTHER" id="PTHR10381">
    <property type="entry name" value="ATP-DEPENDENT CLP PROTEASE PROTEOLYTIC SUBUNIT"/>
    <property type="match status" value="1"/>
</dbReference>
<dbReference type="PANTHER" id="PTHR10381:SF70">
    <property type="entry name" value="ATP-DEPENDENT CLP PROTEASE PROTEOLYTIC SUBUNIT"/>
    <property type="match status" value="1"/>
</dbReference>
<dbReference type="Pfam" id="PF00574">
    <property type="entry name" value="CLP_protease"/>
    <property type="match status" value="1"/>
</dbReference>
<dbReference type="PRINTS" id="PR00127">
    <property type="entry name" value="CLPPROTEASEP"/>
</dbReference>
<dbReference type="SUPFAM" id="SSF52096">
    <property type="entry name" value="ClpP/crotonase"/>
    <property type="match status" value="1"/>
</dbReference>
<dbReference type="PROSITE" id="PS00382">
    <property type="entry name" value="CLP_PROTEASE_HIS"/>
    <property type="match status" value="1"/>
</dbReference>
<dbReference type="PROSITE" id="PS00381">
    <property type="entry name" value="CLP_PROTEASE_SER"/>
    <property type="match status" value="1"/>
</dbReference>
<accession>Q03SM3</accession>
<comment type="function">
    <text evidence="1">Cleaves peptides in various proteins in a process that requires ATP hydrolysis. Has a chymotrypsin-like activity. Plays a major role in the degradation of misfolded proteins.</text>
</comment>
<comment type="catalytic activity">
    <reaction evidence="1">
        <text>Hydrolysis of proteins to small peptides in the presence of ATP and magnesium. alpha-casein is the usual test substrate. In the absence of ATP, only oligopeptides shorter than five residues are hydrolyzed (such as succinyl-Leu-Tyr-|-NHMec, and Leu-Tyr-Leu-|-Tyr-Trp, in which cleavage of the -Tyr-|-Leu- and -Tyr-|-Trp bonds also occurs).</text>
        <dbReference type="EC" id="3.4.21.92"/>
    </reaction>
</comment>
<comment type="subunit">
    <text evidence="1">Fourteen ClpP subunits assemble into 2 heptameric rings which stack back to back to give a disk-like structure with a central cavity, resembling the structure of eukaryotic proteasomes.</text>
</comment>
<comment type="subcellular location">
    <subcellularLocation>
        <location evidence="1">Cytoplasm</location>
    </subcellularLocation>
</comment>
<comment type="similarity">
    <text evidence="1">Belongs to the peptidase S14 family.</text>
</comment>